<evidence type="ECO:0000255" key="1">
    <source>
        <dbReference type="HAMAP-Rule" id="MF_01038"/>
    </source>
</evidence>
<comment type="function">
    <text evidence="1">Essential for rapid growth and for sporulation. Catalyzes the interconversion of 2-phosphoglycerate and 3-phosphoglycerate.</text>
</comment>
<comment type="catalytic activity">
    <reaction evidence="1">
        <text>(2R)-2-phosphoglycerate = (2R)-3-phosphoglycerate</text>
        <dbReference type="Rhea" id="RHEA:15901"/>
        <dbReference type="ChEBI" id="CHEBI:58272"/>
        <dbReference type="ChEBI" id="CHEBI:58289"/>
        <dbReference type="EC" id="5.4.2.12"/>
    </reaction>
</comment>
<comment type="cofactor">
    <cofactor evidence="1">
        <name>Mn(2+)</name>
        <dbReference type="ChEBI" id="CHEBI:29035"/>
    </cofactor>
    <text evidence="1">Binds 2 manganese ions per subunit.</text>
</comment>
<comment type="pathway">
    <text evidence="1">Carbohydrate degradation; glycolysis; pyruvate from D-glyceraldehyde 3-phosphate: step 3/5.</text>
</comment>
<comment type="subunit">
    <text evidence="1">Monomer.</text>
</comment>
<comment type="similarity">
    <text evidence="1">Belongs to the BPG-independent phosphoglycerate mutase family.</text>
</comment>
<dbReference type="EC" id="5.4.2.12" evidence="1"/>
<dbReference type="EMBL" id="AE016877">
    <property type="protein sequence ID" value="AAP12005.1"/>
    <property type="molecule type" value="Genomic_DNA"/>
</dbReference>
<dbReference type="RefSeq" id="NP_834804.1">
    <property type="nucleotide sequence ID" value="NC_004722.1"/>
</dbReference>
<dbReference type="RefSeq" id="WP_001231152.1">
    <property type="nucleotide sequence ID" value="NZ_CP138336.1"/>
</dbReference>
<dbReference type="SMR" id="Q815K7"/>
<dbReference type="STRING" id="226900.BC_5136"/>
<dbReference type="GeneID" id="93005984"/>
<dbReference type="KEGG" id="bce:BC5136"/>
<dbReference type="PATRIC" id="fig|226900.8.peg.5294"/>
<dbReference type="HOGENOM" id="CLU_026099_2_0_9"/>
<dbReference type="OrthoDB" id="9800863at2"/>
<dbReference type="UniPathway" id="UPA00109">
    <property type="reaction ID" value="UER00186"/>
</dbReference>
<dbReference type="Proteomes" id="UP000001417">
    <property type="component" value="Chromosome"/>
</dbReference>
<dbReference type="GO" id="GO:0005829">
    <property type="term" value="C:cytosol"/>
    <property type="evidence" value="ECO:0000318"/>
    <property type="project" value="GO_Central"/>
</dbReference>
<dbReference type="GO" id="GO:0030145">
    <property type="term" value="F:manganese ion binding"/>
    <property type="evidence" value="ECO:0000318"/>
    <property type="project" value="GO_Central"/>
</dbReference>
<dbReference type="GO" id="GO:0004619">
    <property type="term" value="F:phosphoglycerate mutase activity"/>
    <property type="evidence" value="ECO:0000318"/>
    <property type="project" value="GO_Central"/>
</dbReference>
<dbReference type="GO" id="GO:0005975">
    <property type="term" value="P:carbohydrate metabolic process"/>
    <property type="evidence" value="ECO:0000318"/>
    <property type="project" value="GO_Central"/>
</dbReference>
<dbReference type="GO" id="GO:0006007">
    <property type="term" value="P:glucose catabolic process"/>
    <property type="evidence" value="ECO:0007669"/>
    <property type="project" value="InterPro"/>
</dbReference>
<dbReference type="GO" id="GO:0006096">
    <property type="term" value="P:glycolytic process"/>
    <property type="evidence" value="ECO:0007669"/>
    <property type="project" value="UniProtKB-UniRule"/>
</dbReference>
<dbReference type="GO" id="GO:0030435">
    <property type="term" value="P:sporulation resulting in formation of a cellular spore"/>
    <property type="evidence" value="ECO:0007669"/>
    <property type="project" value="UniProtKB-KW"/>
</dbReference>
<dbReference type="CDD" id="cd16010">
    <property type="entry name" value="iPGM"/>
    <property type="match status" value="1"/>
</dbReference>
<dbReference type="FunFam" id="3.40.1450.10:FF:000001">
    <property type="entry name" value="2,3-bisphosphoglycerate-independent phosphoglycerate mutase"/>
    <property type="match status" value="1"/>
</dbReference>
<dbReference type="FunFam" id="3.40.720.10:FF:000001">
    <property type="entry name" value="2,3-bisphosphoglycerate-independent phosphoglycerate mutase"/>
    <property type="match status" value="1"/>
</dbReference>
<dbReference type="Gene3D" id="3.40.720.10">
    <property type="entry name" value="Alkaline Phosphatase, subunit A"/>
    <property type="match status" value="1"/>
</dbReference>
<dbReference type="Gene3D" id="3.40.1450.10">
    <property type="entry name" value="BPG-independent phosphoglycerate mutase, domain B"/>
    <property type="match status" value="1"/>
</dbReference>
<dbReference type="HAMAP" id="MF_01038">
    <property type="entry name" value="GpmI"/>
    <property type="match status" value="1"/>
</dbReference>
<dbReference type="InterPro" id="IPR017850">
    <property type="entry name" value="Alkaline_phosphatase_core_sf"/>
</dbReference>
<dbReference type="InterPro" id="IPR011258">
    <property type="entry name" value="BPG-indep_PGM_N"/>
</dbReference>
<dbReference type="InterPro" id="IPR006124">
    <property type="entry name" value="Metalloenzyme"/>
</dbReference>
<dbReference type="InterPro" id="IPR036646">
    <property type="entry name" value="PGAM_B_sf"/>
</dbReference>
<dbReference type="InterPro" id="IPR005995">
    <property type="entry name" value="Pgm_bpd_ind"/>
</dbReference>
<dbReference type="NCBIfam" id="TIGR01307">
    <property type="entry name" value="pgm_bpd_ind"/>
    <property type="match status" value="1"/>
</dbReference>
<dbReference type="PANTHER" id="PTHR31637">
    <property type="entry name" value="2,3-BISPHOSPHOGLYCERATE-INDEPENDENT PHOSPHOGLYCERATE MUTASE"/>
    <property type="match status" value="1"/>
</dbReference>
<dbReference type="PANTHER" id="PTHR31637:SF0">
    <property type="entry name" value="2,3-BISPHOSPHOGLYCERATE-INDEPENDENT PHOSPHOGLYCERATE MUTASE"/>
    <property type="match status" value="1"/>
</dbReference>
<dbReference type="Pfam" id="PF06415">
    <property type="entry name" value="iPGM_N"/>
    <property type="match status" value="1"/>
</dbReference>
<dbReference type="Pfam" id="PF01676">
    <property type="entry name" value="Metalloenzyme"/>
    <property type="match status" value="1"/>
</dbReference>
<dbReference type="PIRSF" id="PIRSF001492">
    <property type="entry name" value="IPGAM"/>
    <property type="match status" value="1"/>
</dbReference>
<dbReference type="SUPFAM" id="SSF64158">
    <property type="entry name" value="2,3-Bisphosphoglycerate-independent phosphoglycerate mutase, substrate-binding domain"/>
    <property type="match status" value="1"/>
</dbReference>
<dbReference type="SUPFAM" id="SSF53649">
    <property type="entry name" value="Alkaline phosphatase-like"/>
    <property type="match status" value="1"/>
</dbReference>
<keyword id="KW-0324">Glycolysis</keyword>
<keyword id="KW-0413">Isomerase</keyword>
<keyword id="KW-0464">Manganese</keyword>
<keyword id="KW-0479">Metal-binding</keyword>
<keyword id="KW-0597">Phosphoprotein</keyword>
<keyword id="KW-1185">Reference proteome</keyword>
<keyword id="KW-0749">Sporulation</keyword>
<protein>
    <recommendedName>
        <fullName evidence="1">2,3-bisphosphoglycerate-independent phosphoglycerate mutase</fullName>
        <shortName evidence="1">BPG-independent PGAM</shortName>
        <shortName evidence="1">Phosphoglyceromutase</shortName>
        <shortName evidence="1">iPGM</shortName>
        <ecNumber evidence="1">5.4.2.12</ecNumber>
    </recommendedName>
</protein>
<proteinExistence type="inferred from homology"/>
<reference key="1">
    <citation type="journal article" date="2003" name="Nature">
        <title>Genome sequence of Bacillus cereus and comparative analysis with Bacillus anthracis.</title>
        <authorList>
            <person name="Ivanova N."/>
            <person name="Sorokin A."/>
            <person name="Anderson I."/>
            <person name="Galleron N."/>
            <person name="Candelon B."/>
            <person name="Kapatral V."/>
            <person name="Bhattacharyya A."/>
            <person name="Reznik G."/>
            <person name="Mikhailova N."/>
            <person name="Lapidus A."/>
            <person name="Chu L."/>
            <person name="Mazur M."/>
            <person name="Goltsman E."/>
            <person name="Larsen N."/>
            <person name="D'Souza M."/>
            <person name="Walunas T."/>
            <person name="Grechkin Y."/>
            <person name="Pusch G."/>
            <person name="Haselkorn R."/>
            <person name="Fonstein M."/>
            <person name="Ehrlich S.D."/>
            <person name="Overbeek R."/>
            <person name="Kyrpides N.C."/>
        </authorList>
    </citation>
    <scope>NUCLEOTIDE SEQUENCE [LARGE SCALE GENOMIC DNA]</scope>
    <source>
        <strain>ATCC 14579 / DSM 31 / CCUG 7414 / JCM 2152 / NBRC 15305 / NCIMB 9373 / NCTC 2599 / NRRL B-3711</strain>
    </source>
</reference>
<sequence length="509" mass="56353">MRKPTALIILDGFGLREETYGNAVAQAKKPNFDGYWNKFPHTTLTACGEAVGLPEGQMGNSEVGHLNIGAGRIVYQSLTRVNVAIREGEFDKNETFQSAIKSVKEKGTALHLFGLLSDGGVHSHMNHMFALLRLAAKEGVEKVYIHAFLDGRDVGPKTAQSYIDATNEVIKETGVGQFATISGRYYSMDRDKRWDRVEKCYRAMVNGEGPTYKSAEECVEDSYANGIYDEFVLPSVIVNEDNTPVATINDDDAVIFYNFRPDRAIQIARVFTNEDFREFDRGEKVPHIPEFVCMTHFSETVDGYVAFKPMNLDNTLGEVVAQAGLKQLRIAETEKYPHVTFFFSGGREAEFPGEERILINSPKVATYDLKPEMSIYEVTDALVNEIENDKHDVIILNFANCDMVGHSGMMEPTIKAVEATDECLGKVVEAILAKDGVALITADHGNADEELTSEGEPMTAHTTNPVPFIVTKNDVELREDGILGDIAPTMLTLLGVEQPKEMTGKTIIK</sequence>
<organism>
    <name type="scientific">Bacillus cereus (strain ATCC 14579 / DSM 31 / CCUG 7414 / JCM 2152 / NBRC 15305 / NCIMB 9373 / NCTC 2599 / NRRL B-3711)</name>
    <dbReference type="NCBI Taxonomy" id="226900"/>
    <lineage>
        <taxon>Bacteria</taxon>
        <taxon>Bacillati</taxon>
        <taxon>Bacillota</taxon>
        <taxon>Bacilli</taxon>
        <taxon>Bacillales</taxon>
        <taxon>Bacillaceae</taxon>
        <taxon>Bacillus</taxon>
        <taxon>Bacillus cereus group</taxon>
    </lineage>
</organism>
<gene>
    <name evidence="1" type="primary">gpmI</name>
    <name type="ordered locus">BC_5136</name>
</gene>
<name>GPMI_BACCR</name>
<feature type="chain" id="PRO_0000212121" description="2,3-bisphosphoglycerate-independent phosphoglycerate mutase">
    <location>
        <begin position="1"/>
        <end position="509"/>
    </location>
</feature>
<feature type="active site" description="Phosphoserine intermediate" evidence="1">
    <location>
        <position position="61"/>
    </location>
</feature>
<feature type="binding site" evidence="1">
    <location>
        <position position="11"/>
    </location>
    <ligand>
        <name>Mn(2+)</name>
        <dbReference type="ChEBI" id="CHEBI:29035"/>
        <label>2</label>
    </ligand>
</feature>
<feature type="binding site" evidence="1">
    <location>
        <position position="61"/>
    </location>
    <ligand>
        <name>Mn(2+)</name>
        <dbReference type="ChEBI" id="CHEBI:29035"/>
        <label>2</label>
    </ligand>
</feature>
<feature type="binding site" evidence="1">
    <location>
        <position position="122"/>
    </location>
    <ligand>
        <name>substrate</name>
    </ligand>
</feature>
<feature type="binding site" evidence="1">
    <location>
        <begin position="152"/>
        <end position="153"/>
    </location>
    <ligand>
        <name>substrate</name>
    </ligand>
</feature>
<feature type="binding site" evidence="1">
    <location>
        <position position="184"/>
    </location>
    <ligand>
        <name>substrate</name>
    </ligand>
</feature>
<feature type="binding site" evidence="1">
    <location>
        <position position="190"/>
    </location>
    <ligand>
        <name>substrate</name>
    </ligand>
</feature>
<feature type="binding site" evidence="1">
    <location>
        <begin position="260"/>
        <end position="263"/>
    </location>
    <ligand>
        <name>substrate</name>
    </ligand>
</feature>
<feature type="binding site" evidence="1">
    <location>
        <position position="335"/>
    </location>
    <ligand>
        <name>substrate</name>
    </ligand>
</feature>
<feature type="binding site" evidence="1">
    <location>
        <position position="402"/>
    </location>
    <ligand>
        <name>Mn(2+)</name>
        <dbReference type="ChEBI" id="CHEBI:29035"/>
        <label>1</label>
    </ligand>
</feature>
<feature type="binding site" evidence="1">
    <location>
        <position position="406"/>
    </location>
    <ligand>
        <name>Mn(2+)</name>
        <dbReference type="ChEBI" id="CHEBI:29035"/>
        <label>1</label>
    </ligand>
</feature>
<feature type="binding site" evidence="1">
    <location>
        <position position="443"/>
    </location>
    <ligand>
        <name>Mn(2+)</name>
        <dbReference type="ChEBI" id="CHEBI:29035"/>
        <label>2</label>
    </ligand>
</feature>
<feature type="binding site" evidence="1">
    <location>
        <position position="444"/>
    </location>
    <ligand>
        <name>Mn(2+)</name>
        <dbReference type="ChEBI" id="CHEBI:29035"/>
        <label>2</label>
    </ligand>
</feature>
<feature type="binding site" evidence="1">
    <location>
        <position position="461"/>
    </location>
    <ligand>
        <name>Mn(2+)</name>
        <dbReference type="ChEBI" id="CHEBI:29035"/>
        <label>1</label>
    </ligand>
</feature>
<feature type="modified residue" description="Phosphotyrosine" evidence="1">
    <location>
        <position position="35"/>
    </location>
</feature>
<accession>Q815K7</accession>